<comment type="function">
    <text evidence="1">Co-chaperone that binds to numerous kinases and promotes their interaction with the Hsp90 complex, resulting in stabilization and promotion of their activity.</text>
</comment>
<comment type="subunit">
    <text evidence="1">Forms a complex with Hsp90. Interacts with a number of kinases such as CDC2 and Sevenless (By similarity).</text>
</comment>
<comment type="subcellular location">
    <subcellularLocation>
        <location evidence="1">Cytoplasm</location>
    </subcellularLocation>
</comment>
<comment type="similarity">
    <text evidence="3">Belongs to the CDC37 family.</text>
</comment>
<gene>
    <name type="primary">Cdc37</name>
    <name type="ORF">GJ12421</name>
</gene>
<feature type="chain" id="PRO_0000195064" description="Hsp90 co-chaperone Cdc37">
    <location>
        <begin position="1"/>
        <end position="399"/>
    </location>
</feature>
<feature type="region of interest" description="Disordered" evidence="2">
    <location>
        <begin position="1"/>
        <end position="26"/>
    </location>
</feature>
<feature type="region of interest" description="Disordered" evidence="2">
    <location>
        <begin position="345"/>
        <end position="399"/>
    </location>
</feature>
<feature type="compositionally biased region" description="Basic and acidic residues" evidence="2">
    <location>
        <begin position="1"/>
        <end position="11"/>
    </location>
</feature>
<feature type="compositionally biased region" description="Basic and acidic residues" evidence="2">
    <location>
        <begin position="367"/>
        <end position="388"/>
    </location>
</feature>
<sequence>MVDYSKWKNIEISDDEDETHPNIDTPSLFRWRHQARVERMAESEKEKEELKKKRQSYQARLINVKELISKKEGDEVALKKELEKIENEGKELDRQENELLKREKKTPWNVDTISKPGFEKTVINKKPPRKAAEDLTEEEREQRMKQFVKENEKLCKQYGMLRKYDDSKRFLQEHLDLVCEETANYLVIWSINLEMEEKHDLMAHVAHQCICMQYILELAKQLDVDPRACVSSFFSKIQQCVPEYRQQFESEIEGFKERIQKRAQEKLQEAMAQLEEEEKQERMGPGGLDPADVFESLPEELKACFESRDIELLQKTIATMPVDQAKYHMKRCVDSGLWVPNAADVQLGNDETEAKDDETTTATNETPTEKENSKSQNEKSADAAKEEPLYAGVSTDDVD</sequence>
<dbReference type="EMBL" id="L37055">
    <property type="protein sequence ID" value="AAA50964.1"/>
    <property type="molecule type" value="Genomic_DNA"/>
</dbReference>
<dbReference type="EMBL" id="CH940647">
    <property type="protein sequence ID" value="EDW68898.1"/>
    <property type="molecule type" value="Genomic_DNA"/>
</dbReference>
<dbReference type="EMBL" id="AY849340">
    <property type="protein sequence ID" value="AAW59003.1"/>
    <property type="molecule type" value="Genomic_DNA"/>
</dbReference>
<dbReference type="RefSeq" id="XP_002046556.1">
    <property type="nucleotide sequence ID" value="XM_002046520.4"/>
</dbReference>
<dbReference type="SMR" id="Q24740"/>
<dbReference type="FunCoup" id="Q24740">
    <property type="interactions" value="2104"/>
</dbReference>
<dbReference type="STRING" id="7244.Q24740"/>
<dbReference type="EnsemblMetazoa" id="FBtr0228346">
    <property type="protein sequence ID" value="FBpp0226838"/>
    <property type="gene ID" value="FBgn0013067"/>
</dbReference>
<dbReference type="EnsemblMetazoa" id="XM_002046520.3">
    <property type="protein sequence ID" value="XP_002046556.1"/>
    <property type="gene ID" value="LOC6624466"/>
</dbReference>
<dbReference type="GeneID" id="6624466"/>
<dbReference type="KEGG" id="dvi:6624466"/>
<dbReference type="CTD" id="11140"/>
<dbReference type="eggNOG" id="KOG2260">
    <property type="taxonomic scope" value="Eukaryota"/>
</dbReference>
<dbReference type="HOGENOM" id="CLU_046495_0_0_1"/>
<dbReference type="InParanoid" id="Q24740"/>
<dbReference type="OMA" id="AEQCIII"/>
<dbReference type="OrthoDB" id="440202at2759"/>
<dbReference type="PhylomeDB" id="Q24740"/>
<dbReference type="Proteomes" id="UP000008792">
    <property type="component" value="Unassembled WGS sequence"/>
</dbReference>
<dbReference type="GO" id="GO:0005737">
    <property type="term" value="C:cytoplasm"/>
    <property type="evidence" value="ECO:0000250"/>
    <property type="project" value="UniProtKB"/>
</dbReference>
<dbReference type="GO" id="GO:0031072">
    <property type="term" value="F:heat shock protein binding"/>
    <property type="evidence" value="ECO:0007669"/>
    <property type="project" value="TreeGrafter"/>
</dbReference>
<dbReference type="GO" id="GO:0005158">
    <property type="term" value="F:insulin receptor binding"/>
    <property type="evidence" value="ECO:0007669"/>
    <property type="project" value="EnsemblMetazoa"/>
</dbReference>
<dbReference type="GO" id="GO:0019901">
    <property type="term" value="F:protein kinase binding"/>
    <property type="evidence" value="ECO:0007669"/>
    <property type="project" value="InterPro"/>
</dbReference>
<dbReference type="GO" id="GO:0051087">
    <property type="term" value="F:protein-folding chaperone binding"/>
    <property type="evidence" value="ECO:0007669"/>
    <property type="project" value="TreeGrafter"/>
</dbReference>
<dbReference type="GO" id="GO:0051082">
    <property type="term" value="F:unfolded protein binding"/>
    <property type="evidence" value="ECO:0007669"/>
    <property type="project" value="TreeGrafter"/>
</dbReference>
<dbReference type="GO" id="GO:0046628">
    <property type="term" value="P:positive regulation of insulin receptor signaling pathway"/>
    <property type="evidence" value="ECO:0007669"/>
    <property type="project" value="EnsemblMetazoa"/>
</dbReference>
<dbReference type="GO" id="GO:0002052">
    <property type="term" value="P:positive regulation of neuroblast proliferation"/>
    <property type="evidence" value="ECO:0007669"/>
    <property type="project" value="EnsemblMetazoa"/>
</dbReference>
<dbReference type="GO" id="GO:0006457">
    <property type="term" value="P:protein folding"/>
    <property type="evidence" value="ECO:0007669"/>
    <property type="project" value="TreeGrafter"/>
</dbReference>
<dbReference type="GO" id="GO:0050821">
    <property type="term" value="P:protein stabilization"/>
    <property type="evidence" value="ECO:0007669"/>
    <property type="project" value="TreeGrafter"/>
</dbReference>
<dbReference type="FunFam" id="1.20.58.610:FF:000001">
    <property type="entry name" value="Hsp90 co-chaperone Cdc37-like 1"/>
    <property type="match status" value="1"/>
</dbReference>
<dbReference type="Gene3D" id="6.10.140.250">
    <property type="match status" value="1"/>
</dbReference>
<dbReference type="Gene3D" id="1.20.58.610">
    <property type="entry name" value="Cdc37, Hsp90 binding domain"/>
    <property type="match status" value="1"/>
</dbReference>
<dbReference type="InterPro" id="IPR004918">
    <property type="entry name" value="Cdc37"/>
</dbReference>
<dbReference type="InterPro" id="IPR013873">
    <property type="entry name" value="Cdc37_C"/>
</dbReference>
<dbReference type="InterPro" id="IPR013874">
    <property type="entry name" value="Cdc37_Hsp90-bd"/>
</dbReference>
<dbReference type="InterPro" id="IPR038189">
    <property type="entry name" value="Cdc37_Hsp90-bd_sf"/>
</dbReference>
<dbReference type="InterPro" id="IPR013855">
    <property type="entry name" value="Cdc37_N_dom"/>
</dbReference>
<dbReference type="PANTHER" id="PTHR12800">
    <property type="entry name" value="CDC37-RELATED"/>
    <property type="match status" value="1"/>
</dbReference>
<dbReference type="PANTHER" id="PTHR12800:SF4">
    <property type="entry name" value="HSP90 CO-CHAPERONE CDC37"/>
    <property type="match status" value="1"/>
</dbReference>
<dbReference type="Pfam" id="PF08564">
    <property type="entry name" value="CDC37_C"/>
    <property type="match status" value="1"/>
</dbReference>
<dbReference type="Pfam" id="PF08565">
    <property type="entry name" value="CDC37_M"/>
    <property type="match status" value="1"/>
</dbReference>
<dbReference type="Pfam" id="PF03234">
    <property type="entry name" value="CDC37_N"/>
    <property type="match status" value="1"/>
</dbReference>
<dbReference type="SMART" id="SM01069">
    <property type="entry name" value="CDC37_C"/>
    <property type="match status" value="1"/>
</dbReference>
<dbReference type="SMART" id="SM01070">
    <property type="entry name" value="CDC37_M"/>
    <property type="match status" value="1"/>
</dbReference>
<dbReference type="SMART" id="SM01071">
    <property type="entry name" value="CDC37_N"/>
    <property type="match status" value="1"/>
</dbReference>
<dbReference type="SUPFAM" id="SSF101391">
    <property type="entry name" value="Hsp90 co-chaperone CDC37"/>
    <property type="match status" value="1"/>
</dbReference>
<reference key="1">
    <citation type="journal article" date="1994" name="Cell">
        <title>Mutations in Hsp83 and cdc37 impair signaling by the sevenless receptor tyrosine kinase in Drosophila.</title>
        <authorList>
            <person name="Cutforth T."/>
            <person name="Rubin G.M."/>
        </authorList>
    </citation>
    <scope>NUCLEOTIDE SEQUENCE [GENOMIC DNA]</scope>
</reference>
<reference key="2">
    <citation type="journal article" date="2007" name="Nature">
        <title>Evolution of genes and genomes on the Drosophila phylogeny.</title>
        <authorList>
            <consortium name="Drosophila 12 genomes consortium"/>
        </authorList>
    </citation>
    <scope>NUCLEOTIDE SEQUENCE [LARGE SCALE GENOMIC DNA]</scope>
    <source>
        <strain>Tucson 15010-1051.87</strain>
    </source>
</reference>
<reference key="3">
    <citation type="journal article" date="2004" name="Curr. Biol.">
        <title>Selection on codon usage in Drosophila americana.</title>
        <authorList>
            <person name="Maside X."/>
            <person name="Lee A.W."/>
            <person name="Charlesworth B."/>
        </authorList>
    </citation>
    <scope>NUCLEOTIDE SEQUENCE [GENOMIC DNA] OF 44-336</scope>
    <source>
        <strain>A11</strain>
    </source>
</reference>
<name>CDC37_DROVI</name>
<evidence type="ECO:0000250" key="1"/>
<evidence type="ECO:0000256" key="2">
    <source>
        <dbReference type="SAM" id="MobiDB-lite"/>
    </source>
</evidence>
<evidence type="ECO:0000305" key="3"/>
<organism>
    <name type="scientific">Drosophila virilis</name>
    <name type="common">Fruit fly</name>
    <dbReference type="NCBI Taxonomy" id="7244"/>
    <lineage>
        <taxon>Eukaryota</taxon>
        <taxon>Metazoa</taxon>
        <taxon>Ecdysozoa</taxon>
        <taxon>Arthropoda</taxon>
        <taxon>Hexapoda</taxon>
        <taxon>Insecta</taxon>
        <taxon>Pterygota</taxon>
        <taxon>Neoptera</taxon>
        <taxon>Endopterygota</taxon>
        <taxon>Diptera</taxon>
        <taxon>Brachycera</taxon>
        <taxon>Muscomorpha</taxon>
        <taxon>Ephydroidea</taxon>
        <taxon>Drosophilidae</taxon>
        <taxon>Drosophila</taxon>
    </lineage>
</organism>
<accession>Q24740</accession>
<accession>B4LDG0</accession>
<accession>Q5G5F1</accession>
<proteinExistence type="inferred from homology"/>
<keyword id="KW-0143">Chaperone</keyword>
<keyword id="KW-0963">Cytoplasm</keyword>
<keyword id="KW-1185">Reference proteome</keyword>
<protein>
    <recommendedName>
        <fullName>Hsp90 co-chaperone Cdc37</fullName>
    </recommendedName>
    <alternativeName>
        <fullName>Hsp90 chaperone protein kinase-targeting subunit</fullName>
    </alternativeName>
</protein>